<dbReference type="EMBL" id="AY582139">
    <property type="protein sequence ID" value="AAT98568.1"/>
    <property type="molecule type" value="Genomic_DNA"/>
</dbReference>
<dbReference type="RefSeq" id="YP_087024.1">
    <property type="nucleotide sequence ID" value="NC_006290.1"/>
</dbReference>
<dbReference type="GeneID" id="3021580"/>
<dbReference type="GO" id="GO:0009706">
    <property type="term" value="C:chloroplast inner membrane"/>
    <property type="evidence" value="ECO:0007669"/>
    <property type="project" value="UniProtKB-SubCell"/>
</dbReference>
<dbReference type="GO" id="GO:0015031">
    <property type="term" value="P:protein transport"/>
    <property type="evidence" value="ECO:0007669"/>
    <property type="project" value="UniProtKB-KW"/>
</dbReference>
<dbReference type="InterPro" id="IPR008896">
    <property type="entry name" value="TIC214"/>
</dbReference>
<dbReference type="PANTHER" id="PTHR33163:SF40">
    <property type="entry name" value="PROTEIN TIC 214"/>
    <property type="match status" value="1"/>
</dbReference>
<dbReference type="PANTHER" id="PTHR33163">
    <property type="entry name" value="PROTEIN TIC 214-RELATED"/>
    <property type="match status" value="1"/>
</dbReference>
<dbReference type="Pfam" id="PF05758">
    <property type="entry name" value="Ycf1"/>
    <property type="match status" value="2"/>
</dbReference>
<organism>
    <name type="scientific">Panax ginseng</name>
    <name type="common">Korean ginseng</name>
    <dbReference type="NCBI Taxonomy" id="4054"/>
    <lineage>
        <taxon>Eukaryota</taxon>
        <taxon>Viridiplantae</taxon>
        <taxon>Streptophyta</taxon>
        <taxon>Embryophyta</taxon>
        <taxon>Tracheophyta</taxon>
        <taxon>Spermatophyta</taxon>
        <taxon>Magnoliopsida</taxon>
        <taxon>eudicotyledons</taxon>
        <taxon>Gunneridae</taxon>
        <taxon>Pentapetalae</taxon>
        <taxon>asterids</taxon>
        <taxon>campanulids</taxon>
        <taxon>Apiales</taxon>
        <taxon>Araliaceae</taxon>
        <taxon>Panax</taxon>
    </lineage>
</organism>
<reference key="1">
    <citation type="journal article" date="2004" name="DNA Res.">
        <title>Complete chloroplast genome sequence from Korea ginseng (Panax schinseng Nees) and comparative analysis of sequence evolution among 17 vascular plants.</title>
        <authorList>
            <person name="Kim K.-J."/>
            <person name="Lee H.-L."/>
        </authorList>
    </citation>
    <scope>NUCLEOTIDE SEQUENCE [LARGE SCALE GENOMIC DNA]</scope>
</reference>
<proteinExistence type="inferred from homology"/>
<gene>
    <name evidence="1" type="primary">TIC214</name>
    <name type="synonym">ycf1</name>
    <name type="ORF">PSC1261</name>
</gene>
<keyword id="KW-0150">Chloroplast</keyword>
<keyword id="KW-0472">Membrane</keyword>
<keyword id="KW-0934">Plastid</keyword>
<keyword id="KW-1001">Plastid inner membrane</keyword>
<keyword id="KW-0653">Protein transport</keyword>
<keyword id="KW-0812">Transmembrane</keyword>
<keyword id="KW-1133">Transmembrane helix</keyword>
<keyword id="KW-0813">Transport</keyword>
<name>TI214_PANGI</name>
<evidence type="ECO:0000250" key="1">
    <source>
        <dbReference type="UniProtKB" id="P56785"/>
    </source>
</evidence>
<evidence type="ECO:0000255" key="2"/>
<evidence type="ECO:0000256" key="3">
    <source>
        <dbReference type="SAM" id="MobiDB-lite"/>
    </source>
</evidence>
<evidence type="ECO:0000305" key="4"/>
<geneLocation type="chloroplast"/>
<comment type="function">
    <text evidence="1">Involved in protein precursor import into chloroplasts. May be part of an intermediate translocation complex acting as a protein-conducting channel at the inner envelope.</text>
</comment>
<comment type="subunit">
    <text evidence="1">Part of the Tic complex.</text>
</comment>
<comment type="subcellular location">
    <subcellularLocation>
        <location evidence="1">Plastid</location>
        <location evidence="1">Chloroplast inner membrane</location>
        <topology evidence="2">Multi-pass membrane protein</topology>
    </subcellularLocation>
</comment>
<comment type="similarity">
    <text evidence="4">Belongs to the TIC214 family.</text>
</comment>
<feature type="chain" id="PRO_0000262620" description="Protein TIC 214">
    <location>
        <begin position="1"/>
        <end position="1919"/>
    </location>
</feature>
<feature type="transmembrane region" description="Helical" evidence="2">
    <location>
        <begin position="18"/>
        <end position="38"/>
    </location>
</feature>
<feature type="transmembrane region" description="Helical" evidence="2">
    <location>
        <begin position="67"/>
        <end position="87"/>
    </location>
</feature>
<feature type="transmembrane region" description="Helical" evidence="2">
    <location>
        <begin position="90"/>
        <end position="110"/>
    </location>
</feature>
<feature type="transmembrane region" description="Helical" evidence="2">
    <location>
        <begin position="127"/>
        <end position="147"/>
    </location>
</feature>
<feature type="transmembrane region" description="Helical" evidence="2">
    <location>
        <begin position="175"/>
        <end position="195"/>
    </location>
</feature>
<feature type="transmembrane region" description="Helical" evidence="2">
    <location>
        <begin position="224"/>
        <end position="244"/>
    </location>
</feature>
<feature type="region of interest" description="Disordered" evidence="3">
    <location>
        <begin position="250"/>
        <end position="375"/>
    </location>
</feature>
<feature type="region of interest" description="Disordered" evidence="3">
    <location>
        <begin position="1107"/>
        <end position="1129"/>
    </location>
</feature>
<feature type="region of interest" description="Disordered" evidence="3">
    <location>
        <begin position="1606"/>
        <end position="1636"/>
    </location>
</feature>
<feature type="compositionally biased region" description="Acidic residues" evidence="3">
    <location>
        <begin position="259"/>
        <end position="269"/>
    </location>
</feature>
<feature type="compositionally biased region" description="Acidic residues" evidence="3">
    <location>
        <begin position="278"/>
        <end position="288"/>
    </location>
</feature>
<feature type="compositionally biased region" description="Acidic residues" evidence="3">
    <location>
        <begin position="297"/>
        <end position="307"/>
    </location>
</feature>
<feature type="compositionally biased region" description="Acidic residues" evidence="3">
    <location>
        <begin position="316"/>
        <end position="328"/>
    </location>
</feature>
<feature type="compositionally biased region" description="Acidic residues" evidence="3">
    <location>
        <begin position="355"/>
        <end position="366"/>
    </location>
</feature>
<feature type="compositionally biased region" description="Basic residues" evidence="3">
    <location>
        <begin position="1107"/>
        <end position="1117"/>
    </location>
</feature>
<feature type="compositionally biased region" description="Basic and acidic residues" evidence="3">
    <location>
        <begin position="1606"/>
        <end position="1623"/>
    </location>
</feature>
<feature type="compositionally biased region" description="Polar residues" evidence="3">
    <location>
        <begin position="1626"/>
        <end position="1636"/>
    </location>
</feature>
<sequence length="1919" mass="228280">MILKSFLLGNLVSLCMKIINSVVVVGLYYGFLTTFSIGPSYLFLLRARVMEEGEEGTEKKVSATTGFITGQLMMFISIYYAPLHLALGRPHTITVLALPYLLFHFFWNNHKNFFDYGSTTRNSMRNLSIQCVFLNNLIFQLFNHFILPSSMLARLVNIYMFRCNNKMLFVTSSFVGWLIGHILFMKWVGLVLVWIRQNHSIRSNKYIRSNKYLVSELINSMARIFSILLFITCVYYLGRIPSPIITKKLKETPTTEERGESEEETDVEIETPTTEERGESEEETDVEIETPTTEERGESEEETDVEIETPTTEERGESEEETDVEIETASETKGAKQEQEGSTEEDPSPSLFSEEKEDPDKIDETEEIRVNGKEKTKDEFHFTETSYNNSPVYKVSYLYKNQENFNKIKILDKKDEDKGLFWFEKPLVTLLFDYKRWNRPLRYIKNNRFERTARNEMSQYFFYTCRSDGKERISFTYPPSLSTFGEMIQRRMSLPTLEKLSSDELYNHWIYTNKQKKNNLNNEFLNRIKALDMGFLSLDILEKSTRLYNDTKKDYLPKIYDPILNGSYRGTIKKKFSPSIRNKISLENFIETMEINKIHNLLLPDTDYQEFKQKIDPFDKKKRFSTEISHLFTLISKFDRESRSGLNLKGPSLFSENEAKLLKFLLNAIITIANGHKIKQKSFGIKEISKKVPRWSDKFITELEQQTGVIQEGVRVGHQIRSRKIDDIVVFTDNKWNSKNRDKIDLIYTIEYLQESDFRRNIIKGSMRTQRRKTIIWKLFEANAHSPLFLNRRKKSPLFSFDISELMKLIFRNWMGKGAELKDYTEEQTKRREKQEENNIKEKVRIELPEIWDLVPFSKTTRSLLLIIQSMLRKYIILPSLIIVKNIGRILLFQPPEWSEDFHEWKREKHIKCTYNGVQLSETELPANWLTEGIQIKILFPFCLKPWYRSKPKLRPSYRDLKKEQKKDDSCFLTASGMETDLPFGSPRKRTSFFEPIFKDFLALRVLIRRTKHFLQGSKETKRGFIKNVLFLFLKRIKKELSKVNPTLFRLKEVYESGETNQEKGSIISNQTIHNSFNKIRSTDNYSPREKKIKNLTDRTSPIRKKIKSITKEKKKGTPGIKSSPNKRSYNVESPKDIWQILKRRNTRLIWKLQVFLKIFIEKIYIDIFLYIINIARMYTRLVLESTKKIIQKYKYIYNNETNQETINKTNQNTIHFISTIKKSLYNIRNSKKNSHLFFDLSSLSQAYVFYKLSRTRVINLYKLRSVLEYHGTSFFLKTAIKDSFGTQGIFHSELEHTKFPSYGTNQWKNWLRGHYQYNLSQIRWSGLIPQKWRNTINQGRITQKKNLTKWDSKDRLLHYKKQNAFEVYSLPNPNKNENSQKYYRYDLLSYKSINYERKTDPYIIYGSPLQVNNNQRISYNYTTQKQKFFDILEDIPINNYLGKGDIMYMEKNPDRKYFDWKIINFFLREKVDIETWIKMDPNSNKNTKIESKNYQKIDKIHKNQIFYLTLYQDLEKNPLNQKKHLFGWMEMNQEILNRHISNLELWFFPEFVLLYNVYKKKPWIIPSKLLLLNLNRNENVSDNKNINGKQKWNFFRPSNEKKIFELKNRNQEEKEPADRGDLGSDAQNQGNRRFVLSNQQKDIEEDYAKLVLKRGKTKKQSKNKSNVKVELNALLKQHLLFQLRYDEGLKQRMINNLKVSCLLIGLKNPRNITVSSIQNREISLDIMLIRKSLTVRELMKRGVLIIEPIRLSVKKDGQFIMYQTIGISLIHKSKYQTNQRYREQRYIDKKKFDESTPRYQRRTGNRDKNHYDFLVPEKILSSRRRRELRILIHFNSRSRKGVDSNPVFCNKKNIKSRSPFLDESKRFDRDKNELIKLKFFLGPNYRLEDLACINRYWFDTNNGSNFSMLRIYPQLKIR</sequence>
<protein>
    <recommendedName>
        <fullName evidence="1">Protein TIC 214</fullName>
    </recommendedName>
    <alternativeName>
        <fullName evidence="1">Translocon at the inner envelope membrane of chloroplasts 214</fullName>
        <shortName evidence="1">AtTIC214</shortName>
    </alternativeName>
</protein>
<accession>Q68RU8</accession>